<gene>
    <name evidence="1" type="primary">ycgR2</name>
    <name type="ordered locus">Daro_3338</name>
</gene>
<comment type="function">
    <text evidence="1">Acts as a flagellar brake, regulating swimming and swarming in a bis-(3'-5') cyclic diguanylic acid (c-di-GMP)-dependent manner. Binds 1 c-di-GMP dimer per subunit. Increasing levels of c-di-GMP lead to decreased motility.</text>
</comment>
<comment type="subunit">
    <text evidence="1">Monomer. Interacts with the flagellar basal bodies.</text>
</comment>
<comment type="subcellular location">
    <subcellularLocation>
        <location evidence="1">Bacterial flagellum basal body</location>
    </subcellularLocation>
</comment>
<comment type="similarity">
    <text evidence="1">Belongs to the YcgR family.</text>
</comment>
<name>YCGR2_DECAR</name>
<dbReference type="EMBL" id="CP000089">
    <property type="protein sequence ID" value="AAZ48067.1"/>
    <property type="molecule type" value="Genomic_DNA"/>
</dbReference>
<dbReference type="SMR" id="Q47AR4"/>
<dbReference type="STRING" id="159087.Daro_3338"/>
<dbReference type="KEGG" id="dar:Daro_3338"/>
<dbReference type="eggNOG" id="COG5581">
    <property type="taxonomic scope" value="Bacteria"/>
</dbReference>
<dbReference type="HOGENOM" id="CLU_086025_0_0_4"/>
<dbReference type="OrthoDB" id="5572581at2"/>
<dbReference type="GO" id="GO:0009425">
    <property type="term" value="C:bacterial-type flagellum basal body"/>
    <property type="evidence" value="ECO:0007669"/>
    <property type="project" value="UniProtKB-SubCell"/>
</dbReference>
<dbReference type="GO" id="GO:0035438">
    <property type="term" value="F:cyclic-di-GMP binding"/>
    <property type="evidence" value="ECO:0007669"/>
    <property type="project" value="UniProtKB-UniRule"/>
</dbReference>
<dbReference type="GO" id="GO:0071973">
    <property type="term" value="P:bacterial-type flagellum-dependent cell motility"/>
    <property type="evidence" value="ECO:0007669"/>
    <property type="project" value="UniProtKB-UniRule"/>
</dbReference>
<dbReference type="GO" id="GO:0071945">
    <property type="term" value="P:regulation of bacterial-type flagellum-dependent cell motility by regulation of motor speed"/>
    <property type="evidence" value="ECO:0007669"/>
    <property type="project" value="UniProtKB-UniRule"/>
</dbReference>
<dbReference type="Gene3D" id="2.30.110.10">
    <property type="entry name" value="Electron Transport, Fmn-binding Protein, Chain A"/>
    <property type="match status" value="1"/>
</dbReference>
<dbReference type="Gene3D" id="2.40.10.220">
    <property type="entry name" value="predicted glycosyltransferase like domains"/>
    <property type="match status" value="1"/>
</dbReference>
<dbReference type="HAMAP" id="MF_01457">
    <property type="entry name" value="YcgR"/>
    <property type="match status" value="1"/>
</dbReference>
<dbReference type="InterPro" id="IPR009875">
    <property type="entry name" value="PilZ_domain"/>
</dbReference>
<dbReference type="InterPro" id="IPR012349">
    <property type="entry name" value="Split_barrel_FMN-bd"/>
</dbReference>
<dbReference type="InterPro" id="IPR023787">
    <property type="entry name" value="T3SS_YcgR"/>
</dbReference>
<dbReference type="InterPro" id="IPR009926">
    <property type="entry name" value="T3SS_YcgR_PilZN"/>
</dbReference>
<dbReference type="Pfam" id="PF07238">
    <property type="entry name" value="PilZ"/>
    <property type="match status" value="1"/>
</dbReference>
<dbReference type="Pfam" id="PF07317">
    <property type="entry name" value="PilZN"/>
    <property type="match status" value="1"/>
</dbReference>
<accession>Q47AR4</accession>
<protein>
    <recommendedName>
        <fullName evidence="1">Flagellar brake protein YcgR 2</fullName>
    </recommendedName>
    <alternativeName>
        <fullName evidence="1">Cyclic di-GMP binding protein YcgR 2</fullName>
    </alternativeName>
</protein>
<proteinExistence type="inferred from homology"/>
<evidence type="ECO:0000255" key="1">
    <source>
        <dbReference type="HAMAP-Rule" id="MF_01457"/>
    </source>
</evidence>
<reference key="1">
    <citation type="journal article" date="2009" name="BMC Genomics">
        <title>Metabolic analysis of the soil microbe Dechloromonas aromatica str. RCB: indications of a surprisingly complex life-style and cryptic anaerobic pathways for aromatic degradation.</title>
        <authorList>
            <person name="Salinero K.K."/>
            <person name="Keller K."/>
            <person name="Feil W.S."/>
            <person name="Feil H."/>
            <person name="Trong S."/>
            <person name="Di Bartolo G."/>
            <person name="Lapidus A."/>
        </authorList>
    </citation>
    <scope>NUCLEOTIDE SEQUENCE [LARGE SCALE GENOMIC DNA]</scope>
    <source>
        <strain>RCB</strain>
    </source>
</reference>
<keyword id="KW-0975">Bacterial flagellum</keyword>
<keyword id="KW-0973">c-di-GMP</keyword>
<keyword id="KW-0547">Nucleotide-binding</keyword>
<organism>
    <name type="scientific">Dechloromonas aromatica (strain RCB)</name>
    <dbReference type="NCBI Taxonomy" id="159087"/>
    <lineage>
        <taxon>Bacteria</taxon>
        <taxon>Pseudomonadati</taxon>
        <taxon>Pseudomonadota</taxon>
        <taxon>Betaproteobacteria</taxon>
        <taxon>Rhodocyclales</taxon>
        <taxon>Azonexaceae</taxon>
        <taxon>Dechloromonas</taxon>
    </lineage>
</organism>
<feature type="chain" id="PRO_0000395272" description="Flagellar brake protein YcgR 2">
    <location>
        <begin position="1"/>
        <end position="247"/>
    </location>
</feature>
<feature type="domain" description="PilZ" evidence="1">
    <location>
        <begin position="124"/>
        <end position="237"/>
    </location>
</feature>
<sequence length="247" mass="27499">MTQIAQLSEAEIEARFRVMGTKPVAFLIAGFAKEREPFSVHFGAGGEMFLTTPLAVEPEKGLLIFDCSGSVESNQRFLRSDRNIFIGRPGGVHVQFTTGAAREVAHEGGKAFAVALPQYIVRLQRREYFRVETPRVNPLEFFGRLADGSLLKLPVHDISISGLGVDAAVLPEGVMPGVVLPNCHFSLPGDGKDMFFSATIRNTLELERRSGARHWRIGMQFNDLSSGDETRIQRYIARIERERHELS</sequence>